<dbReference type="EC" id="7.1.1.-"/>
<dbReference type="EMBL" id="AF130217">
    <property type="protein sequence ID" value="AAF08173.1"/>
    <property type="molecule type" value="Genomic_DNA"/>
</dbReference>
<dbReference type="SMR" id="Q9TL56"/>
<dbReference type="GO" id="GO:0009535">
    <property type="term" value="C:chloroplast thylakoid membrane"/>
    <property type="evidence" value="ECO:0007669"/>
    <property type="project" value="UniProtKB-SubCell"/>
</dbReference>
<dbReference type="GO" id="GO:0008137">
    <property type="term" value="F:NADH dehydrogenase (ubiquinone) activity"/>
    <property type="evidence" value="ECO:0007669"/>
    <property type="project" value="InterPro"/>
</dbReference>
<dbReference type="GO" id="GO:0048038">
    <property type="term" value="F:quinone binding"/>
    <property type="evidence" value="ECO:0007669"/>
    <property type="project" value="UniProtKB-KW"/>
</dbReference>
<dbReference type="GO" id="GO:0042773">
    <property type="term" value="P:ATP synthesis coupled electron transport"/>
    <property type="evidence" value="ECO:0007669"/>
    <property type="project" value="InterPro"/>
</dbReference>
<dbReference type="GO" id="GO:0015990">
    <property type="term" value="P:electron transport coupled proton transport"/>
    <property type="evidence" value="ECO:0007669"/>
    <property type="project" value="TreeGrafter"/>
</dbReference>
<dbReference type="Gene3D" id="1.20.5.2700">
    <property type="match status" value="1"/>
</dbReference>
<dbReference type="InterPro" id="IPR002128">
    <property type="entry name" value="NADH_UbQ_OxRdtase_chlpt_su5_C"/>
</dbReference>
<dbReference type="InterPro" id="IPR018393">
    <property type="entry name" value="NADHpl_OxRdtase_5_subgr"/>
</dbReference>
<dbReference type="InterPro" id="IPR001750">
    <property type="entry name" value="ND/Mrp_TM"/>
</dbReference>
<dbReference type="InterPro" id="IPR003945">
    <property type="entry name" value="NU5C-like"/>
</dbReference>
<dbReference type="InterPro" id="IPR001516">
    <property type="entry name" value="Proton_antipo_N"/>
</dbReference>
<dbReference type="NCBIfam" id="TIGR01974">
    <property type="entry name" value="NDH_I_L"/>
    <property type="match status" value="1"/>
</dbReference>
<dbReference type="NCBIfam" id="NF005141">
    <property type="entry name" value="PRK06590.1"/>
    <property type="match status" value="1"/>
</dbReference>
<dbReference type="PANTHER" id="PTHR42829">
    <property type="entry name" value="NADH-UBIQUINONE OXIDOREDUCTASE CHAIN 5"/>
    <property type="match status" value="1"/>
</dbReference>
<dbReference type="PANTHER" id="PTHR42829:SF2">
    <property type="entry name" value="NADH-UBIQUINONE OXIDOREDUCTASE CHAIN 5"/>
    <property type="match status" value="1"/>
</dbReference>
<dbReference type="Pfam" id="PF01010">
    <property type="entry name" value="Proton_antipo_C"/>
    <property type="match status" value="1"/>
</dbReference>
<dbReference type="Pfam" id="PF00361">
    <property type="entry name" value="Proton_antipo_M"/>
    <property type="match status" value="1"/>
</dbReference>
<dbReference type="Pfam" id="PF00662">
    <property type="entry name" value="Proton_antipo_N"/>
    <property type="match status" value="1"/>
</dbReference>
<dbReference type="PRINTS" id="PR01434">
    <property type="entry name" value="NADHDHGNASE5"/>
</dbReference>
<dbReference type="PRINTS" id="PR01435">
    <property type="entry name" value="NPOXDRDTASE5"/>
</dbReference>
<proteinExistence type="inferred from homology"/>
<accession>Q9TL56</accession>
<sequence length="743" mass="83781">MEHTYQYAWIIPFVPLPVPMLIGVGLLLFPTATKNLRRVWAFHSVLLLSIVMIFSIDLSIQQINSSSIYQYVWSWVINNDFSLELGYLIDPLTSIMLILITTVGIMVLIYSDSYMSHDQGYLRFFAYMSFFSTSMLGLVTSSNLIQIYIFWELVGMCSYLLIGFWFTRPLAANACQKAFVTNRIGDLGLLLGILGFYWITGSFEFRDLFQIVTNLIYNNEVNLVFLTICAVLLFAGAVAKSAQFPLHVWLPDAMEGPTPISALIHAATMVAAGIFLVARLLPLFIVIPYILNLISFIGIITLLLGATLALAQKDIKRSLAYSTMSQLGYMMLALGMGSYRSALFHLITHAYPKALLFLGSGSVIHSMETVVGYSPDKSQNMVLMGGLTKHVPITKTAFFLGTLSLCGIPPLACFWSKDEILNDSWLYSPIFAIIACSTAGLTAFYMFRIYLLTFEGHLNVHFQNYSGKKNISFYSISLWGKGGLKTVNKNFCLLTLLTTNNESASFFSNKTYRIDENIRKMTRPFMTITHFGNKNTYSYPYESDNTMLLPLLVLVLFTLFVGAIGIPFNQEGMDLDILSKWLSPSINLLHQDLNNSMDWYEFVKDAIFSVSIAYFGIVIASFLYKPVYSSLQNLDLINSFVKTGPNRIFWDKIINVIYDWSYNRGYIDAFYATSLTGGIRGLAELTNFFDRRVIDGITNGVGVMSFFVGEGIRYLGGGRISSYLFLYLSYVSIFLLIYYFLNL</sequence>
<evidence type="ECO:0000250" key="1"/>
<evidence type="ECO:0000255" key="2"/>
<evidence type="ECO:0000305" key="3"/>
<reference key="1">
    <citation type="journal article" date="2000" name="Mol. Phylogenet. Evol.">
        <title>The phylogeny of the asteridae sensu lato based on chloroplast ndhF gene sequences.</title>
        <authorList>
            <person name="Olmstead R.G."/>
            <person name="Kim K.-J."/>
            <person name="Jansen R.K."/>
            <person name="Wagstaff S.J."/>
        </authorList>
    </citation>
    <scope>NUCLEOTIDE SEQUENCE [GENOMIC DNA]</scope>
</reference>
<name>NU5C_CARCG</name>
<feature type="chain" id="PRO_0000118178" description="NAD(P)H-quinone oxidoreductase subunit 5, chloroplastic">
    <location>
        <begin position="1"/>
        <end position="743"/>
    </location>
</feature>
<feature type="transmembrane region" description="Helical" evidence="2">
    <location>
        <begin position="9"/>
        <end position="29"/>
    </location>
</feature>
<feature type="transmembrane region" description="Helical" evidence="2">
    <location>
        <begin position="40"/>
        <end position="60"/>
    </location>
</feature>
<feature type="transmembrane region" description="Helical" evidence="2">
    <location>
        <begin position="89"/>
        <end position="109"/>
    </location>
</feature>
<feature type="transmembrane region" description="Helical" evidence="2">
    <location>
        <begin position="125"/>
        <end position="145"/>
    </location>
</feature>
<feature type="transmembrane region" description="Helical" evidence="2">
    <location>
        <begin position="147"/>
        <end position="167"/>
    </location>
</feature>
<feature type="transmembrane region" description="Helical" evidence="2">
    <location>
        <begin position="184"/>
        <end position="204"/>
    </location>
</feature>
<feature type="transmembrane region" description="Helical" evidence="2">
    <location>
        <begin position="219"/>
        <end position="239"/>
    </location>
</feature>
<feature type="transmembrane region" description="Helical" evidence="2">
    <location>
        <begin position="258"/>
        <end position="278"/>
    </location>
</feature>
<feature type="transmembrane region" description="Helical" evidence="2">
    <location>
        <begin position="280"/>
        <end position="300"/>
    </location>
</feature>
<feature type="transmembrane region" description="Helical" evidence="2">
    <location>
        <begin position="396"/>
        <end position="416"/>
    </location>
</feature>
<feature type="transmembrane region" description="Helical" evidence="2">
    <location>
        <begin position="425"/>
        <end position="445"/>
    </location>
</feature>
<feature type="transmembrane region" description="Helical" evidence="2">
    <location>
        <begin position="548"/>
        <end position="568"/>
    </location>
</feature>
<feature type="transmembrane region" description="Helical" evidence="2">
    <location>
        <begin position="607"/>
        <end position="627"/>
    </location>
</feature>
<feature type="transmembrane region" description="Helical" evidence="2">
    <location>
        <begin position="723"/>
        <end position="743"/>
    </location>
</feature>
<gene>
    <name type="primary">ndhF</name>
</gene>
<geneLocation type="chloroplast"/>
<comment type="function">
    <text evidence="1">NDH shuttles electrons from NAD(P)H:plastoquinone, via FMN and iron-sulfur (Fe-S) centers, to quinones in the photosynthetic chain and possibly in a chloroplast respiratory chain. The immediate electron acceptor for the enzyme in this species is believed to be plastoquinone. Couples the redox reaction to proton translocation, and thus conserves the redox energy in a proton gradient (By similarity).</text>
</comment>
<comment type="catalytic activity">
    <reaction>
        <text>a plastoquinone + NADH + (n+1) H(+)(in) = a plastoquinol + NAD(+) + n H(+)(out)</text>
        <dbReference type="Rhea" id="RHEA:42608"/>
        <dbReference type="Rhea" id="RHEA-COMP:9561"/>
        <dbReference type="Rhea" id="RHEA-COMP:9562"/>
        <dbReference type="ChEBI" id="CHEBI:15378"/>
        <dbReference type="ChEBI" id="CHEBI:17757"/>
        <dbReference type="ChEBI" id="CHEBI:57540"/>
        <dbReference type="ChEBI" id="CHEBI:57945"/>
        <dbReference type="ChEBI" id="CHEBI:62192"/>
    </reaction>
</comment>
<comment type="catalytic activity">
    <reaction>
        <text>a plastoquinone + NADPH + (n+1) H(+)(in) = a plastoquinol + NADP(+) + n H(+)(out)</text>
        <dbReference type="Rhea" id="RHEA:42612"/>
        <dbReference type="Rhea" id="RHEA-COMP:9561"/>
        <dbReference type="Rhea" id="RHEA-COMP:9562"/>
        <dbReference type="ChEBI" id="CHEBI:15378"/>
        <dbReference type="ChEBI" id="CHEBI:17757"/>
        <dbReference type="ChEBI" id="CHEBI:57783"/>
        <dbReference type="ChEBI" id="CHEBI:58349"/>
        <dbReference type="ChEBI" id="CHEBI:62192"/>
    </reaction>
</comment>
<comment type="subunit">
    <text evidence="1">NDH is composed of at least 16 different subunits, 5 of which are encoded in the nucleus.</text>
</comment>
<comment type="subcellular location">
    <subcellularLocation>
        <location evidence="1">Plastid</location>
        <location evidence="1">Chloroplast thylakoid membrane</location>
        <topology evidence="1">Multi-pass membrane protein</topology>
    </subcellularLocation>
</comment>
<comment type="similarity">
    <text evidence="3">Belongs to the complex I subunit 5 family.</text>
</comment>
<organism>
    <name type="scientific">Carpenteria californica</name>
    <name type="common">Tree anemone</name>
    <dbReference type="NCBI Taxonomy" id="23101"/>
    <lineage>
        <taxon>Eukaryota</taxon>
        <taxon>Viridiplantae</taxon>
        <taxon>Streptophyta</taxon>
        <taxon>Embryophyta</taxon>
        <taxon>Tracheophyta</taxon>
        <taxon>Spermatophyta</taxon>
        <taxon>Magnoliopsida</taxon>
        <taxon>eudicotyledons</taxon>
        <taxon>Gunneridae</taxon>
        <taxon>Pentapetalae</taxon>
        <taxon>asterids</taxon>
        <taxon>Cornales</taxon>
        <taxon>Hydrangeaceae</taxon>
        <taxon>Carpenteria</taxon>
    </lineage>
</organism>
<keyword id="KW-0150">Chloroplast</keyword>
<keyword id="KW-0472">Membrane</keyword>
<keyword id="KW-0520">NAD</keyword>
<keyword id="KW-0521">NADP</keyword>
<keyword id="KW-0934">Plastid</keyword>
<keyword id="KW-0618">Plastoquinone</keyword>
<keyword id="KW-0874">Quinone</keyword>
<keyword id="KW-0793">Thylakoid</keyword>
<keyword id="KW-1278">Translocase</keyword>
<keyword id="KW-0812">Transmembrane</keyword>
<keyword id="KW-1133">Transmembrane helix</keyword>
<keyword id="KW-0813">Transport</keyword>
<protein>
    <recommendedName>
        <fullName>NAD(P)H-quinone oxidoreductase subunit 5, chloroplastic</fullName>
        <ecNumber>7.1.1.-</ecNumber>
    </recommendedName>
    <alternativeName>
        <fullName>NAD(P)H dehydrogenase subunit 5</fullName>
    </alternativeName>
    <alternativeName>
        <fullName>NADH-plastoquinone oxidoreductase subunit 5</fullName>
    </alternativeName>
</protein>